<proteinExistence type="inferred from homology"/>
<evidence type="ECO:0000255" key="1">
    <source>
        <dbReference type="HAMAP-Rule" id="MF_00114"/>
    </source>
</evidence>
<comment type="function">
    <text evidence="1">Catalyzes a reversible aldol reaction between acetaldehyde and D-glyceraldehyde 3-phosphate to generate 2-deoxy-D-ribose 5-phosphate.</text>
</comment>
<comment type="catalytic activity">
    <reaction evidence="1">
        <text>2-deoxy-D-ribose 5-phosphate = D-glyceraldehyde 3-phosphate + acetaldehyde</text>
        <dbReference type="Rhea" id="RHEA:12821"/>
        <dbReference type="ChEBI" id="CHEBI:15343"/>
        <dbReference type="ChEBI" id="CHEBI:59776"/>
        <dbReference type="ChEBI" id="CHEBI:62877"/>
        <dbReference type="EC" id="4.1.2.4"/>
    </reaction>
</comment>
<comment type="pathway">
    <text evidence="1">Carbohydrate degradation; 2-deoxy-D-ribose 1-phosphate degradation; D-glyceraldehyde 3-phosphate and acetaldehyde from 2-deoxy-alpha-D-ribose 1-phosphate: step 2/2.</text>
</comment>
<comment type="subcellular location">
    <subcellularLocation>
        <location evidence="1">Cytoplasm</location>
    </subcellularLocation>
</comment>
<comment type="similarity">
    <text evidence="1">Belongs to the DeoC/FbaB aldolase family. DeoC type 1 subfamily.</text>
</comment>
<gene>
    <name evidence="1" type="primary">deoC</name>
    <name type="ordered locus">STH565</name>
</gene>
<name>DEOC_SYMTH</name>
<organism>
    <name type="scientific">Symbiobacterium thermophilum (strain DSM 24528 / JCM 14929 / IAM 14863 / T)</name>
    <dbReference type="NCBI Taxonomy" id="292459"/>
    <lineage>
        <taxon>Bacteria</taxon>
        <taxon>Bacillati</taxon>
        <taxon>Bacillota</taxon>
        <taxon>Clostridia</taxon>
        <taxon>Eubacteriales</taxon>
        <taxon>Symbiobacteriaceae</taxon>
        <taxon>Symbiobacterium</taxon>
    </lineage>
</organism>
<reference key="1">
    <citation type="journal article" date="2004" name="Nucleic Acids Res.">
        <title>Genome sequence of Symbiobacterium thermophilum, an uncultivable bacterium that depends on microbial commensalism.</title>
        <authorList>
            <person name="Ueda K."/>
            <person name="Yamashita A."/>
            <person name="Ishikawa J."/>
            <person name="Shimada M."/>
            <person name="Watsuji T."/>
            <person name="Morimura K."/>
            <person name="Ikeda H."/>
            <person name="Hattori M."/>
            <person name="Beppu T."/>
        </authorList>
    </citation>
    <scope>NUCLEOTIDE SEQUENCE [LARGE SCALE GENOMIC DNA]</scope>
    <source>
        <strain>DSM 24528 / JCM 14929 / IAM 14863 / T</strain>
    </source>
</reference>
<sequence>MTRRELARMIDHTLLKPDATEAQIRQLCAEGREHGFMSVCVNPYWVPLCAELLSGTEVKVCTTIGFPLGANRSEIKAVEAEDAVARGAREVDMVINVGALKSGRRDVVLNDIRAVVSAVAGEALVKVIIETGLLTDEEKVIACQLAQEAGADFVKTSTGFGTGGATVHDIALMRRTVGAGMGVKASGGVRDLETALAMIGAGANRIGASAGVAILAGLEA</sequence>
<feature type="chain" id="PRO_0000231569" description="Deoxyribose-phosphate aldolase">
    <location>
        <begin position="1"/>
        <end position="220"/>
    </location>
</feature>
<feature type="active site" description="Proton donor/acceptor" evidence="1">
    <location>
        <position position="92"/>
    </location>
</feature>
<feature type="active site" description="Schiff-base intermediate with acetaldehyde" evidence="1">
    <location>
        <position position="155"/>
    </location>
</feature>
<feature type="active site" description="Proton donor/acceptor" evidence="1">
    <location>
        <position position="184"/>
    </location>
</feature>
<dbReference type="EC" id="4.1.2.4" evidence="1"/>
<dbReference type="EMBL" id="AP006840">
    <property type="protein sequence ID" value="BAD39550.1"/>
    <property type="molecule type" value="Genomic_DNA"/>
</dbReference>
<dbReference type="RefSeq" id="WP_011194699.1">
    <property type="nucleotide sequence ID" value="NC_006177.1"/>
</dbReference>
<dbReference type="SMR" id="Q67RZ3"/>
<dbReference type="STRING" id="292459.STH565"/>
<dbReference type="KEGG" id="sth:STH565"/>
<dbReference type="eggNOG" id="COG0274">
    <property type="taxonomic scope" value="Bacteria"/>
</dbReference>
<dbReference type="HOGENOM" id="CLU_053595_0_1_9"/>
<dbReference type="OrthoDB" id="9778711at2"/>
<dbReference type="UniPathway" id="UPA00002">
    <property type="reaction ID" value="UER00468"/>
</dbReference>
<dbReference type="Proteomes" id="UP000000417">
    <property type="component" value="Chromosome"/>
</dbReference>
<dbReference type="GO" id="GO:0005737">
    <property type="term" value="C:cytoplasm"/>
    <property type="evidence" value="ECO:0007669"/>
    <property type="project" value="UniProtKB-SubCell"/>
</dbReference>
<dbReference type="GO" id="GO:0004139">
    <property type="term" value="F:deoxyribose-phosphate aldolase activity"/>
    <property type="evidence" value="ECO:0007669"/>
    <property type="project" value="UniProtKB-UniRule"/>
</dbReference>
<dbReference type="GO" id="GO:0006018">
    <property type="term" value="P:2-deoxyribose 1-phosphate catabolic process"/>
    <property type="evidence" value="ECO:0007669"/>
    <property type="project" value="UniProtKB-UniRule"/>
</dbReference>
<dbReference type="GO" id="GO:0016052">
    <property type="term" value="P:carbohydrate catabolic process"/>
    <property type="evidence" value="ECO:0007669"/>
    <property type="project" value="TreeGrafter"/>
</dbReference>
<dbReference type="GO" id="GO:0009264">
    <property type="term" value="P:deoxyribonucleotide catabolic process"/>
    <property type="evidence" value="ECO:0007669"/>
    <property type="project" value="InterPro"/>
</dbReference>
<dbReference type="CDD" id="cd00959">
    <property type="entry name" value="DeoC"/>
    <property type="match status" value="1"/>
</dbReference>
<dbReference type="FunFam" id="3.20.20.70:FF:000044">
    <property type="entry name" value="Deoxyribose-phosphate aldolase"/>
    <property type="match status" value="1"/>
</dbReference>
<dbReference type="Gene3D" id="3.20.20.70">
    <property type="entry name" value="Aldolase class I"/>
    <property type="match status" value="1"/>
</dbReference>
<dbReference type="HAMAP" id="MF_00114">
    <property type="entry name" value="DeoC_type1"/>
    <property type="match status" value="1"/>
</dbReference>
<dbReference type="InterPro" id="IPR013785">
    <property type="entry name" value="Aldolase_TIM"/>
</dbReference>
<dbReference type="InterPro" id="IPR011343">
    <property type="entry name" value="DeoC"/>
</dbReference>
<dbReference type="InterPro" id="IPR002915">
    <property type="entry name" value="DeoC/FbaB/LacD_aldolase"/>
</dbReference>
<dbReference type="InterPro" id="IPR028581">
    <property type="entry name" value="DeoC_typeI"/>
</dbReference>
<dbReference type="NCBIfam" id="TIGR00126">
    <property type="entry name" value="deoC"/>
    <property type="match status" value="1"/>
</dbReference>
<dbReference type="PANTHER" id="PTHR10889">
    <property type="entry name" value="DEOXYRIBOSE-PHOSPHATE ALDOLASE"/>
    <property type="match status" value="1"/>
</dbReference>
<dbReference type="PANTHER" id="PTHR10889:SF1">
    <property type="entry name" value="DEOXYRIBOSE-PHOSPHATE ALDOLASE"/>
    <property type="match status" value="1"/>
</dbReference>
<dbReference type="Pfam" id="PF01791">
    <property type="entry name" value="DeoC"/>
    <property type="match status" value="1"/>
</dbReference>
<dbReference type="PIRSF" id="PIRSF001357">
    <property type="entry name" value="DeoC"/>
    <property type="match status" value="1"/>
</dbReference>
<dbReference type="SMART" id="SM01133">
    <property type="entry name" value="DeoC"/>
    <property type="match status" value="1"/>
</dbReference>
<dbReference type="SUPFAM" id="SSF51569">
    <property type="entry name" value="Aldolase"/>
    <property type="match status" value="1"/>
</dbReference>
<accession>Q67RZ3</accession>
<keyword id="KW-0963">Cytoplasm</keyword>
<keyword id="KW-0456">Lyase</keyword>
<keyword id="KW-1185">Reference proteome</keyword>
<keyword id="KW-0704">Schiff base</keyword>
<protein>
    <recommendedName>
        <fullName evidence="1">Deoxyribose-phosphate aldolase</fullName>
        <shortName evidence="1">DERA</shortName>
        <ecNumber evidence="1">4.1.2.4</ecNumber>
    </recommendedName>
    <alternativeName>
        <fullName evidence="1">2-deoxy-D-ribose 5-phosphate aldolase</fullName>
    </alternativeName>
    <alternativeName>
        <fullName evidence="1">Phosphodeoxyriboaldolase</fullName>
        <shortName evidence="1">Deoxyriboaldolase</shortName>
    </alternativeName>
</protein>